<protein>
    <recommendedName>
        <fullName evidence="1">Tol-Pal system protein TolB</fullName>
    </recommendedName>
</protein>
<reference key="1">
    <citation type="journal article" date="2000" name="Nature">
        <title>The genome sequence of the food-borne pathogen Campylobacter jejuni reveals hypervariable sequences.</title>
        <authorList>
            <person name="Parkhill J."/>
            <person name="Wren B.W."/>
            <person name="Mungall K.L."/>
            <person name="Ketley J.M."/>
            <person name="Churcher C.M."/>
            <person name="Basham D."/>
            <person name="Chillingworth T."/>
            <person name="Davies R.M."/>
            <person name="Feltwell T."/>
            <person name="Holroyd S."/>
            <person name="Jagels K."/>
            <person name="Karlyshev A.V."/>
            <person name="Moule S."/>
            <person name="Pallen M.J."/>
            <person name="Penn C.W."/>
            <person name="Quail M.A."/>
            <person name="Rajandream M.A."/>
            <person name="Rutherford K.M."/>
            <person name="van Vliet A.H.M."/>
            <person name="Whitehead S."/>
            <person name="Barrell B.G."/>
        </authorList>
    </citation>
    <scope>NUCLEOTIDE SEQUENCE [LARGE SCALE GENOMIC DNA]</scope>
    <source>
        <strain>ATCC 700819 / NCTC 11168</strain>
    </source>
</reference>
<name>TOLB_CAMJE</name>
<keyword id="KW-0131">Cell cycle</keyword>
<keyword id="KW-0132">Cell division</keyword>
<keyword id="KW-0574">Periplasm</keyword>
<keyword id="KW-1185">Reference proteome</keyword>
<keyword id="KW-0732">Signal</keyword>
<feature type="signal peptide" evidence="1">
    <location>
        <begin position="1"/>
        <end position="17"/>
    </location>
</feature>
<feature type="chain" id="PRO_0000034634" description="Tol-Pal system protein TolB" evidence="1">
    <location>
        <begin position="18"/>
        <end position="402"/>
    </location>
</feature>
<comment type="function">
    <text evidence="1">Part of the Tol-Pal system, which plays a role in outer membrane invagination during cell division and is important for maintaining outer membrane integrity.</text>
</comment>
<comment type="subunit">
    <text evidence="1">The Tol-Pal system is composed of five core proteins: the inner membrane proteins TolA, TolQ and TolR, the periplasmic protein TolB and the outer membrane protein Pal. They form a network linking the inner and outer membranes and the peptidoglycan layer.</text>
</comment>
<comment type="subcellular location">
    <subcellularLocation>
        <location evidence="1">Periplasm</location>
    </subcellularLocation>
</comment>
<comment type="similarity">
    <text evidence="1">Belongs to the TolB family.</text>
</comment>
<sequence>MKKIVAIFLVFLGSLWAEDPVIDVVNSGVVLPKIIVKDNSNLSDENLKKSFYNIIVNDLKVSSNFEVVANATETSNYIFEYTLNKNGNTLSLNVKIKAGGSDKSEQTYTLNGLEQYPFLAHKSVKASVNALGLAPVDWMDHKILIARNSSSKKSQIIMADYTLTYQKVIVDGGLNLFPKWGNKEQTLFYYTAYDHDKPTLYRYDLNTNKASKILSSGGMVVASDVNVDGSKLLVTMAPKDQPDVYLYDLNTKNLTQLTNYSGIDVNGNFIGSDDSKVVFVSDRLGYPNIFMQDLNSNSAEQVVFHGRNNSAVSTYKDFLVYSSREPNQAGVFNIYLMSINSDYIRQLTANGKNLFPRFSSDGGSIVFIKYLGAQSALGVIRVNANKTFYFPLRVGKIQSIDW</sequence>
<dbReference type="EMBL" id="AL111168">
    <property type="protein sequence ID" value="CAL34283.1"/>
    <property type="molecule type" value="Genomic_DNA"/>
</dbReference>
<dbReference type="PIR" id="H81427">
    <property type="entry name" value="H81427"/>
</dbReference>
<dbReference type="RefSeq" id="WP_002858647.1">
    <property type="nucleotide sequence ID" value="NZ_SZUC01000005.1"/>
</dbReference>
<dbReference type="RefSeq" id="YP_002343572.1">
    <property type="nucleotide sequence ID" value="NC_002163.1"/>
</dbReference>
<dbReference type="SMR" id="Q9PJ14"/>
<dbReference type="STRING" id="192222.Cj0112"/>
<dbReference type="PaxDb" id="192222-Cj0112"/>
<dbReference type="EnsemblBacteria" id="CAL34283">
    <property type="protein sequence ID" value="CAL34283"/>
    <property type="gene ID" value="Cj0112"/>
</dbReference>
<dbReference type="GeneID" id="904443"/>
<dbReference type="KEGG" id="cje:Cj0112"/>
<dbReference type="PATRIC" id="fig|192222.6.peg.110"/>
<dbReference type="eggNOG" id="COG0823">
    <property type="taxonomic scope" value="Bacteria"/>
</dbReference>
<dbReference type="HOGENOM" id="CLU_665280_0_0_7"/>
<dbReference type="OrthoDB" id="9815657at2"/>
<dbReference type="Proteomes" id="UP000000799">
    <property type="component" value="Chromosome"/>
</dbReference>
<dbReference type="GO" id="GO:0042597">
    <property type="term" value="C:periplasmic space"/>
    <property type="evidence" value="ECO:0007669"/>
    <property type="project" value="UniProtKB-SubCell"/>
</dbReference>
<dbReference type="GO" id="GO:0051301">
    <property type="term" value="P:cell division"/>
    <property type="evidence" value="ECO:0007669"/>
    <property type="project" value="UniProtKB-KW"/>
</dbReference>
<dbReference type="GO" id="GO:0017038">
    <property type="term" value="P:protein import"/>
    <property type="evidence" value="ECO:0007669"/>
    <property type="project" value="InterPro"/>
</dbReference>
<dbReference type="FunFam" id="2.120.10.30:FF:000140">
    <property type="entry name" value="Tol-Pal system protein TolB"/>
    <property type="match status" value="1"/>
</dbReference>
<dbReference type="Gene3D" id="2.120.10.30">
    <property type="entry name" value="TolB, C-terminal domain"/>
    <property type="match status" value="1"/>
</dbReference>
<dbReference type="HAMAP" id="MF_00671">
    <property type="entry name" value="TolB"/>
    <property type="match status" value="1"/>
</dbReference>
<dbReference type="InterPro" id="IPR011042">
    <property type="entry name" value="6-blade_b-propeller_TolB-like"/>
</dbReference>
<dbReference type="InterPro" id="IPR014167">
    <property type="entry name" value="Tol-Pal_TolB"/>
</dbReference>
<dbReference type="NCBIfam" id="NF003124">
    <property type="entry name" value="PRK04043.1"/>
    <property type="match status" value="1"/>
</dbReference>
<dbReference type="PANTHER" id="PTHR36842:SF1">
    <property type="entry name" value="PROTEIN TOLB"/>
    <property type="match status" value="1"/>
</dbReference>
<dbReference type="PANTHER" id="PTHR36842">
    <property type="entry name" value="PROTEIN TOLB HOMOLOG"/>
    <property type="match status" value="1"/>
</dbReference>
<dbReference type="SUPFAM" id="SSF69304">
    <property type="entry name" value="Tricorn protease N-terminal domain"/>
    <property type="match status" value="1"/>
</dbReference>
<accession>Q9PJ14</accession>
<accession>Q0PC25</accession>
<proteinExistence type="inferred from homology"/>
<gene>
    <name evidence="1" type="primary">tolB</name>
    <name type="ordered locus">Cj0112</name>
</gene>
<evidence type="ECO:0000255" key="1">
    <source>
        <dbReference type="HAMAP-Rule" id="MF_00671"/>
    </source>
</evidence>
<organism>
    <name type="scientific">Campylobacter jejuni subsp. jejuni serotype O:2 (strain ATCC 700819 / NCTC 11168)</name>
    <dbReference type="NCBI Taxonomy" id="192222"/>
    <lineage>
        <taxon>Bacteria</taxon>
        <taxon>Pseudomonadati</taxon>
        <taxon>Campylobacterota</taxon>
        <taxon>Epsilonproteobacteria</taxon>
        <taxon>Campylobacterales</taxon>
        <taxon>Campylobacteraceae</taxon>
        <taxon>Campylobacter</taxon>
    </lineage>
</organism>